<keyword id="KW-0342">GTP-binding</keyword>
<keyword id="KW-0547">Nucleotide-binding</keyword>
<keyword id="KW-1185">Reference proteome</keyword>
<keyword id="KW-0677">Repeat</keyword>
<keyword id="KW-0690">Ribosome biogenesis</keyword>
<feature type="chain" id="PRO_0000179030" description="GTPase Der">
    <location>
        <begin position="1"/>
        <end position="493"/>
    </location>
</feature>
<feature type="domain" description="EngA-type G 1">
    <location>
        <begin position="3"/>
        <end position="166"/>
    </location>
</feature>
<feature type="domain" description="EngA-type G 2">
    <location>
        <begin position="198"/>
        <end position="371"/>
    </location>
</feature>
<feature type="domain" description="KH-like" evidence="1">
    <location>
        <begin position="372"/>
        <end position="456"/>
    </location>
</feature>
<feature type="region of interest" description="Disordered" evidence="2">
    <location>
        <begin position="166"/>
        <end position="195"/>
    </location>
</feature>
<feature type="region of interest" description="Disordered" evidence="2">
    <location>
        <begin position="454"/>
        <end position="493"/>
    </location>
</feature>
<feature type="compositionally biased region" description="Acidic residues" evidence="2">
    <location>
        <begin position="167"/>
        <end position="184"/>
    </location>
</feature>
<feature type="compositionally biased region" description="Basic and acidic residues" evidence="2">
    <location>
        <begin position="454"/>
        <end position="463"/>
    </location>
</feature>
<feature type="compositionally biased region" description="Basic residues" evidence="2">
    <location>
        <begin position="471"/>
        <end position="493"/>
    </location>
</feature>
<feature type="binding site" evidence="1">
    <location>
        <begin position="9"/>
        <end position="16"/>
    </location>
    <ligand>
        <name>GTP</name>
        <dbReference type="ChEBI" id="CHEBI:37565"/>
        <label>1</label>
    </ligand>
</feature>
<feature type="binding site" evidence="1">
    <location>
        <begin position="56"/>
        <end position="60"/>
    </location>
    <ligand>
        <name>GTP</name>
        <dbReference type="ChEBI" id="CHEBI:37565"/>
        <label>1</label>
    </ligand>
</feature>
<feature type="binding site" evidence="1">
    <location>
        <begin position="118"/>
        <end position="121"/>
    </location>
    <ligand>
        <name>GTP</name>
        <dbReference type="ChEBI" id="CHEBI:37565"/>
        <label>1</label>
    </ligand>
</feature>
<feature type="binding site" evidence="1">
    <location>
        <begin position="204"/>
        <end position="211"/>
    </location>
    <ligand>
        <name>GTP</name>
        <dbReference type="ChEBI" id="CHEBI:37565"/>
        <label>2</label>
    </ligand>
</feature>
<feature type="binding site" evidence="1">
    <location>
        <begin position="251"/>
        <end position="255"/>
    </location>
    <ligand>
        <name>GTP</name>
        <dbReference type="ChEBI" id="CHEBI:37565"/>
        <label>2</label>
    </ligand>
</feature>
<feature type="binding site" evidence="1">
    <location>
        <begin position="316"/>
        <end position="319"/>
    </location>
    <ligand>
        <name>GTP</name>
        <dbReference type="ChEBI" id="CHEBI:37565"/>
        <label>2</label>
    </ligand>
</feature>
<dbReference type="EMBL" id="AE004091">
    <property type="protein sequence ID" value="AAG07186.1"/>
    <property type="molecule type" value="Genomic_DNA"/>
</dbReference>
<dbReference type="PIR" id="B83171">
    <property type="entry name" value="B83171"/>
</dbReference>
<dbReference type="RefSeq" id="NP_252488.1">
    <property type="nucleotide sequence ID" value="NC_002516.2"/>
</dbReference>
<dbReference type="RefSeq" id="WP_003092786.1">
    <property type="nucleotide sequence ID" value="NZ_QZGE01000001.1"/>
</dbReference>
<dbReference type="SMR" id="Q9HXJ8"/>
<dbReference type="FunCoup" id="Q9HXJ8">
    <property type="interactions" value="583"/>
</dbReference>
<dbReference type="STRING" id="208964.PA3799"/>
<dbReference type="PaxDb" id="208964-PA3799"/>
<dbReference type="GeneID" id="77219705"/>
<dbReference type="GeneID" id="878229"/>
<dbReference type="KEGG" id="pae:PA3799"/>
<dbReference type="PATRIC" id="fig|208964.12.peg.3978"/>
<dbReference type="PseudoCAP" id="PA3799"/>
<dbReference type="HOGENOM" id="CLU_016077_6_2_6"/>
<dbReference type="InParanoid" id="Q9HXJ8"/>
<dbReference type="OrthoDB" id="9805918at2"/>
<dbReference type="PhylomeDB" id="Q9HXJ8"/>
<dbReference type="BioCyc" id="PAER208964:G1FZ6-3870-MONOMER"/>
<dbReference type="Proteomes" id="UP000002438">
    <property type="component" value="Chromosome"/>
</dbReference>
<dbReference type="GO" id="GO:0005525">
    <property type="term" value="F:GTP binding"/>
    <property type="evidence" value="ECO:0007669"/>
    <property type="project" value="UniProtKB-UniRule"/>
</dbReference>
<dbReference type="GO" id="GO:0043022">
    <property type="term" value="F:ribosome binding"/>
    <property type="evidence" value="ECO:0000318"/>
    <property type="project" value="GO_Central"/>
</dbReference>
<dbReference type="GO" id="GO:0042254">
    <property type="term" value="P:ribosome biogenesis"/>
    <property type="evidence" value="ECO:0007669"/>
    <property type="project" value="UniProtKB-KW"/>
</dbReference>
<dbReference type="CDD" id="cd01894">
    <property type="entry name" value="EngA1"/>
    <property type="match status" value="1"/>
</dbReference>
<dbReference type="CDD" id="cd01895">
    <property type="entry name" value="EngA2"/>
    <property type="match status" value="1"/>
</dbReference>
<dbReference type="FunFam" id="3.30.300.20:FF:000004">
    <property type="entry name" value="GTPase Der"/>
    <property type="match status" value="1"/>
</dbReference>
<dbReference type="FunFam" id="3.40.50.300:FF:000040">
    <property type="entry name" value="GTPase Der"/>
    <property type="match status" value="1"/>
</dbReference>
<dbReference type="FunFam" id="3.40.50.300:FF:000057">
    <property type="entry name" value="GTPase Der"/>
    <property type="match status" value="1"/>
</dbReference>
<dbReference type="Gene3D" id="3.30.300.20">
    <property type="match status" value="1"/>
</dbReference>
<dbReference type="Gene3D" id="3.40.50.300">
    <property type="entry name" value="P-loop containing nucleotide triphosphate hydrolases"/>
    <property type="match status" value="2"/>
</dbReference>
<dbReference type="HAMAP" id="MF_00195">
    <property type="entry name" value="GTPase_Der"/>
    <property type="match status" value="1"/>
</dbReference>
<dbReference type="InterPro" id="IPR031166">
    <property type="entry name" value="G_ENGA"/>
</dbReference>
<dbReference type="InterPro" id="IPR006073">
    <property type="entry name" value="GTP-bd"/>
</dbReference>
<dbReference type="InterPro" id="IPR016484">
    <property type="entry name" value="GTPase_Der"/>
</dbReference>
<dbReference type="InterPro" id="IPR032859">
    <property type="entry name" value="KH_dom-like"/>
</dbReference>
<dbReference type="InterPro" id="IPR015946">
    <property type="entry name" value="KH_dom-like_a/b"/>
</dbReference>
<dbReference type="InterPro" id="IPR027417">
    <property type="entry name" value="P-loop_NTPase"/>
</dbReference>
<dbReference type="InterPro" id="IPR005225">
    <property type="entry name" value="Small_GTP-bd"/>
</dbReference>
<dbReference type="NCBIfam" id="TIGR03594">
    <property type="entry name" value="GTPase_EngA"/>
    <property type="match status" value="1"/>
</dbReference>
<dbReference type="NCBIfam" id="TIGR00231">
    <property type="entry name" value="small_GTP"/>
    <property type="match status" value="2"/>
</dbReference>
<dbReference type="PANTHER" id="PTHR43834">
    <property type="entry name" value="GTPASE DER"/>
    <property type="match status" value="1"/>
</dbReference>
<dbReference type="PANTHER" id="PTHR43834:SF6">
    <property type="entry name" value="GTPASE DER"/>
    <property type="match status" value="1"/>
</dbReference>
<dbReference type="Pfam" id="PF14714">
    <property type="entry name" value="KH_dom-like"/>
    <property type="match status" value="1"/>
</dbReference>
<dbReference type="Pfam" id="PF01926">
    <property type="entry name" value="MMR_HSR1"/>
    <property type="match status" value="2"/>
</dbReference>
<dbReference type="PIRSF" id="PIRSF006485">
    <property type="entry name" value="GTP-binding_EngA"/>
    <property type="match status" value="1"/>
</dbReference>
<dbReference type="PRINTS" id="PR00326">
    <property type="entry name" value="GTP1OBG"/>
</dbReference>
<dbReference type="SUPFAM" id="SSF52540">
    <property type="entry name" value="P-loop containing nucleoside triphosphate hydrolases"/>
    <property type="match status" value="2"/>
</dbReference>
<dbReference type="PROSITE" id="PS51712">
    <property type="entry name" value="G_ENGA"/>
    <property type="match status" value="2"/>
</dbReference>
<evidence type="ECO:0000255" key="1">
    <source>
        <dbReference type="HAMAP-Rule" id="MF_00195"/>
    </source>
</evidence>
<evidence type="ECO:0000256" key="2">
    <source>
        <dbReference type="SAM" id="MobiDB-lite"/>
    </source>
</evidence>
<reference key="1">
    <citation type="journal article" date="2000" name="Nature">
        <title>Complete genome sequence of Pseudomonas aeruginosa PAO1, an opportunistic pathogen.</title>
        <authorList>
            <person name="Stover C.K."/>
            <person name="Pham X.-Q.T."/>
            <person name="Erwin A.L."/>
            <person name="Mizoguchi S.D."/>
            <person name="Warrener P."/>
            <person name="Hickey M.J."/>
            <person name="Brinkman F.S.L."/>
            <person name="Hufnagle W.O."/>
            <person name="Kowalik D.J."/>
            <person name="Lagrou M."/>
            <person name="Garber R.L."/>
            <person name="Goltry L."/>
            <person name="Tolentino E."/>
            <person name="Westbrock-Wadman S."/>
            <person name="Yuan Y."/>
            <person name="Brody L.L."/>
            <person name="Coulter S.N."/>
            <person name="Folger K.R."/>
            <person name="Kas A."/>
            <person name="Larbig K."/>
            <person name="Lim R.M."/>
            <person name="Smith K.A."/>
            <person name="Spencer D.H."/>
            <person name="Wong G.K.-S."/>
            <person name="Wu Z."/>
            <person name="Paulsen I.T."/>
            <person name="Reizer J."/>
            <person name="Saier M.H. Jr."/>
            <person name="Hancock R.E.W."/>
            <person name="Lory S."/>
            <person name="Olson M.V."/>
        </authorList>
    </citation>
    <scope>NUCLEOTIDE SEQUENCE [LARGE SCALE GENOMIC DNA]</scope>
    <source>
        <strain>ATCC 15692 / DSM 22644 / CIP 104116 / JCM 14847 / LMG 12228 / 1C / PRS 101 / PAO1</strain>
    </source>
</reference>
<organism>
    <name type="scientific">Pseudomonas aeruginosa (strain ATCC 15692 / DSM 22644 / CIP 104116 / JCM 14847 / LMG 12228 / 1C / PRS 101 / PAO1)</name>
    <dbReference type="NCBI Taxonomy" id="208964"/>
    <lineage>
        <taxon>Bacteria</taxon>
        <taxon>Pseudomonadati</taxon>
        <taxon>Pseudomonadota</taxon>
        <taxon>Gammaproteobacteria</taxon>
        <taxon>Pseudomonadales</taxon>
        <taxon>Pseudomonadaceae</taxon>
        <taxon>Pseudomonas</taxon>
    </lineage>
</organism>
<accession>Q9HXJ8</accession>
<proteinExistence type="inferred from homology"/>
<protein>
    <recommendedName>
        <fullName evidence="1">GTPase Der</fullName>
    </recommendedName>
    <alternativeName>
        <fullName evidence="1">GTP-binding protein EngA</fullName>
    </alternativeName>
</protein>
<sequence length="493" mass="55006">MVPVIALVGRPNVGKSTLFNRLTKSRDAIVAEYAGLTRDRQYGEARWQGRTYIVIDTGGISGDEEGIDAKMAEQSLQAIEEADAVLFLVDSRAGMTAADQMIAEHLRKRNKRSFLIANKVDTIDPDLARAEFSPLGLGDALPIAAAHGRGINHMLQEALGIFPKDNAEEEGEGEPASEEVAEGEEPTRIPGPSEKDGIKIAIIGRPNVGKSTLVNRMLGEERVIVYDQAGTTRDSIYIPFERNEEKYTLIDTAGVRRRGKIFEAVEKFSVVKTLQAIQDANVVIFVMDAREGVVEHDLNLLGFVLETGRALVIALNKWDGMEAAERDYVKTELERRLLFVDFADIHFISALHGTGVGHLYKSVQESFRSAVTRWPTSRLTSILEDAVQVHQPPMVNGRRIKLRYAHLGGANPPLIVIHGNQVDAVPKAYTRYLEKTYRRVLKLVGTPIRIEYKGGENPYEGKKNSLTARQVNKKRRLMSHHKKAEKKKKDKRR</sequence>
<comment type="function">
    <text evidence="1">GTPase that plays an essential role in the late steps of ribosome biogenesis.</text>
</comment>
<comment type="subunit">
    <text evidence="1">Associates with the 50S ribosomal subunit.</text>
</comment>
<comment type="similarity">
    <text evidence="1">Belongs to the TRAFAC class TrmE-Era-EngA-EngB-Septin-like GTPase superfamily. EngA (Der) GTPase family.</text>
</comment>
<gene>
    <name evidence="1" type="primary">der</name>
    <name type="synonym">engA</name>
    <name type="ordered locus">PA3799</name>
</gene>
<name>DER_PSEAE</name>